<name>CNOT9_RAT</name>
<gene>
    <name type="primary">Cnot9</name>
    <name type="synonym">Rcd1</name>
    <name type="synonym">Rqcd1</name>
</gene>
<protein>
    <recommendedName>
        <fullName>CCR4-NOT transcription complex subunit 9</fullName>
    </recommendedName>
    <alternativeName>
        <fullName>Cell differentiation protein RQCD1 homolog</fullName>
        <shortName>Rcd-1</shortName>
    </alternativeName>
</protein>
<feature type="chain" id="PRO_0000327229" description="CCR4-NOT transcription complex subunit 9">
    <location>
        <begin position="1"/>
        <end position="299"/>
    </location>
</feature>
<feature type="modified residue" description="N-acetylmethionine" evidence="2">
    <location>
        <position position="1"/>
    </location>
</feature>
<organism>
    <name type="scientific">Rattus norvegicus</name>
    <name type="common">Rat</name>
    <dbReference type="NCBI Taxonomy" id="10116"/>
    <lineage>
        <taxon>Eukaryota</taxon>
        <taxon>Metazoa</taxon>
        <taxon>Chordata</taxon>
        <taxon>Craniata</taxon>
        <taxon>Vertebrata</taxon>
        <taxon>Euteleostomi</taxon>
        <taxon>Mammalia</taxon>
        <taxon>Eutheria</taxon>
        <taxon>Euarchontoglires</taxon>
        <taxon>Glires</taxon>
        <taxon>Rodentia</taxon>
        <taxon>Myomorpha</taxon>
        <taxon>Muroidea</taxon>
        <taxon>Muridae</taxon>
        <taxon>Murinae</taxon>
        <taxon>Rattus</taxon>
    </lineage>
</organism>
<comment type="function">
    <text evidence="1 5">Component of the CCR4-NOT complex which is one of the major cellular mRNA deadenylases and is linked to various cellular processes including bulk mRNA degradation, miRNA-mediated repression, translational repression during translational initiation and general transcription regulation. Additional complex functions may be a consequence of its influence on mRNA expression. Involved in down-regulation of MYB- and JUN-dependent transcription. Enhances ligand-dependent transcriptional activity of nuclear hormone receptors. May play a role in cell differentiation (By similarity).</text>
</comment>
<comment type="subunit">
    <text evidence="5">Homodimer. Component of the CCR4-NOT complex; distinct complexes seem to exist that differ in the participation of probably mutually exclusive catalytic subunits. Interacts with MYB, ATF2, RARA, RARB, RARG, RXRA, RXRB and RXRG. Identified in a complex with ATF2 bound to target DNA. Interacts with NANOS2. Directly interacts with ZNF335.</text>
</comment>
<comment type="subcellular location">
    <subcellularLocation>
        <location evidence="3">Nucleus</location>
    </subcellularLocation>
    <subcellularLocation>
        <location evidence="3">Cytoplasm</location>
        <location evidence="3">P-body</location>
    </subcellularLocation>
    <text evidence="3">NANOS2 promotes its localization to P-body.</text>
</comment>
<comment type="tissue specificity">
    <text evidence="4">Detected in adult spleen, thymus, testis, bone marrow, lung and brain. Detected in embryonic brain, liver, lung, intestine, heart, kidney, thymus and spleen (at protein level).</text>
</comment>
<comment type="similarity">
    <text evidence="6">Belongs to the CNOT9 family.</text>
</comment>
<reference key="1">
    <citation type="journal article" date="2004" name="Genome Res.">
        <title>The status, quality, and expansion of the NIH full-length cDNA project: the Mammalian Gene Collection (MGC).</title>
        <authorList>
            <consortium name="The MGC Project Team"/>
        </authorList>
    </citation>
    <scope>NUCLEOTIDE SEQUENCE [LARGE SCALE MRNA]</scope>
    <source>
        <tissue>Lung</tissue>
    </source>
</reference>
<reference key="2">
    <citation type="journal article" date="2002" name="EMBO J.">
        <title>Mammalian Rcd1 is a novel transcriptional cofactor that mediates retinoic acid-induced cell differentiation.</title>
        <authorList>
            <person name="Hiroi N."/>
            <person name="Ito T."/>
            <person name="Yamamoto H."/>
            <person name="Ochiya T."/>
            <person name="Jinno S."/>
            <person name="Okayama H."/>
        </authorList>
    </citation>
    <scope>TISSUE SPECIFICITY</scope>
</reference>
<reference key="3">
    <citation type="journal article" date="2008" name="J. Biol. Chem.">
        <title>Components of the CCR4-NOT complex function as nuclear hormone receptor coactivators via association with the NRC-interacting Factor NIF-1.</title>
        <authorList>
            <person name="Garapaty S."/>
            <person name="Mahajan M.A."/>
            <person name="Samuels H.H."/>
        </authorList>
    </citation>
    <scope>FUNCTION</scope>
    <scope>INTERACTION WITH ZNF335</scope>
</reference>
<accession>Q5PQL2</accession>
<evidence type="ECO:0000250" key="1"/>
<evidence type="ECO:0000250" key="2">
    <source>
        <dbReference type="UniProtKB" id="Q92600"/>
    </source>
</evidence>
<evidence type="ECO:0000250" key="3">
    <source>
        <dbReference type="UniProtKB" id="Q9JKY0"/>
    </source>
</evidence>
<evidence type="ECO:0000269" key="4">
    <source>
    </source>
</evidence>
<evidence type="ECO:0000269" key="5">
    <source>
    </source>
</evidence>
<evidence type="ECO:0000305" key="6"/>
<sequence length="299" mass="33601">MHSLATAAPVPTALAQVDREKIYQWINELSSPETRENALLELSKKRESVPDLAPMLWHSFGTIAALLQEIVNIYPSINPPTLTAHQSNRVCNALALLQCVASHPETRSAFLAAHIPLFLYPFLHTVSKTRPFEYLRLTSLGVIGALVKTDEQEVINFLLTTEIIPLCLRIMESGSELSKTVATFILQKILLDDTGLAYICQTYERFSHVAMILGKMVLQLSKEPSARLLKHVVRCYLRLSDNPRAREALRQCLPDQLKDTTFAQVLKDDTTTKRWLAQLVKNLQEGQVTDPRGIPLPPQ</sequence>
<keyword id="KW-0007">Acetylation</keyword>
<keyword id="KW-0010">Activator</keyword>
<keyword id="KW-0963">Cytoplasm</keyword>
<keyword id="KW-0539">Nucleus</keyword>
<keyword id="KW-1185">Reference proteome</keyword>
<keyword id="KW-0678">Repressor</keyword>
<keyword id="KW-0943">RNA-mediated gene silencing</keyword>
<keyword id="KW-0804">Transcription</keyword>
<keyword id="KW-0805">Transcription regulation</keyword>
<keyword id="KW-0810">Translation regulation</keyword>
<proteinExistence type="evidence at protein level"/>
<dbReference type="EMBL" id="BC087134">
    <property type="protein sequence ID" value="AAH87134.1"/>
    <property type="molecule type" value="mRNA"/>
</dbReference>
<dbReference type="RefSeq" id="NP_001009357.1">
    <property type="nucleotide sequence ID" value="NM_001009357.1"/>
</dbReference>
<dbReference type="SMR" id="Q5PQL2"/>
<dbReference type="BioGRID" id="256986">
    <property type="interactions" value="1"/>
</dbReference>
<dbReference type="FunCoup" id="Q5PQL2">
    <property type="interactions" value="4001"/>
</dbReference>
<dbReference type="IntAct" id="Q5PQL2">
    <property type="interactions" value="6"/>
</dbReference>
<dbReference type="STRING" id="10116.ENSRNOP00000021548"/>
<dbReference type="PhosphoSitePlus" id="Q5PQL2"/>
<dbReference type="jPOST" id="Q5PQL2"/>
<dbReference type="PaxDb" id="10116-ENSRNOP00000021548"/>
<dbReference type="Ensembl" id="ENSRNOT00000100848.1">
    <property type="protein sequence ID" value="ENSRNOP00000097848.1"/>
    <property type="gene ID" value="ENSRNOG00000016034.7"/>
</dbReference>
<dbReference type="GeneID" id="301513"/>
<dbReference type="KEGG" id="rno:301513"/>
<dbReference type="UCSC" id="RGD:1311495">
    <property type="organism name" value="rat"/>
</dbReference>
<dbReference type="AGR" id="RGD:1311495"/>
<dbReference type="CTD" id="9125"/>
<dbReference type="RGD" id="1311495">
    <property type="gene designation" value="Cnot9"/>
</dbReference>
<dbReference type="eggNOG" id="KOG3036">
    <property type="taxonomic scope" value="Eukaryota"/>
</dbReference>
<dbReference type="GeneTree" id="ENSGT00390000001225"/>
<dbReference type="HOGENOM" id="CLU_039962_2_0_1"/>
<dbReference type="InParanoid" id="Q5PQL2"/>
<dbReference type="OMA" id="EKVYTWI"/>
<dbReference type="OrthoDB" id="1183224at2759"/>
<dbReference type="PhylomeDB" id="Q5PQL2"/>
<dbReference type="TreeFam" id="TF105734"/>
<dbReference type="Reactome" id="R-RNO-6804115">
    <property type="pathway name" value="TP53 regulates transcription of additional cell cycle genes whose exact role in the p53 pathway remain uncertain"/>
</dbReference>
<dbReference type="PRO" id="PR:Q5PQL2"/>
<dbReference type="Proteomes" id="UP000002494">
    <property type="component" value="Chromosome 9"/>
</dbReference>
<dbReference type="Bgee" id="ENSRNOG00000016034">
    <property type="expression patterns" value="Expressed in thymus and 20 other cell types or tissues"/>
</dbReference>
<dbReference type="GO" id="GO:0030014">
    <property type="term" value="C:CCR4-NOT complex"/>
    <property type="evidence" value="ECO:0000250"/>
    <property type="project" value="UniProtKB"/>
</dbReference>
<dbReference type="GO" id="GO:0030015">
    <property type="term" value="C:CCR4-NOT core complex"/>
    <property type="evidence" value="ECO:0000318"/>
    <property type="project" value="GO_Central"/>
</dbReference>
<dbReference type="GO" id="GO:0005634">
    <property type="term" value="C:nucleus"/>
    <property type="evidence" value="ECO:0007669"/>
    <property type="project" value="UniProtKB-SubCell"/>
</dbReference>
<dbReference type="GO" id="GO:0000932">
    <property type="term" value="C:P-body"/>
    <property type="evidence" value="ECO:0000250"/>
    <property type="project" value="UniProtKB"/>
</dbReference>
<dbReference type="GO" id="GO:0032991">
    <property type="term" value="C:protein-containing complex"/>
    <property type="evidence" value="ECO:0000266"/>
    <property type="project" value="RGD"/>
</dbReference>
<dbReference type="GO" id="GO:0005154">
    <property type="term" value="F:epidermal growth factor receptor binding"/>
    <property type="evidence" value="ECO:0000266"/>
    <property type="project" value="RGD"/>
</dbReference>
<dbReference type="GO" id="GO:0019900">
    <property type="term" value="F:kinase binding"/>
    <property type="evidence" value="ECO:0000266"/>
    <property type="project" value="RGD"/>
</dbReference>
<dbReference type="GO" id="GO:0019904">
    <property type="term" value="F:protein domain specific binding"/>
    <property type="evidence" value="ECO:0000266"/>
    <property type="project" value="RGD"/>
</dbReference>
<dbReference type="GO" id="GO:0042803">
    <property type="term" value="F:protein homodimerization activity"/>
    <property type="evidence" value="ECO:0000266"/>
    <property type="project" value="RGD"/>
</dbReference>
<dbReference type="GO" id="GO:0003713">
    <property type="term" value="F:transcription coactivator activity"/>
    <property type="evidence" value="ECO:0000250"/>
    <property type="project" value="UniProtKB"/>
</dbReference>
<dbReference type="GO" id="GO:0019221">
    <property type="term" value="P:cytokine-mediated signaling pathway"/>
    <property type="evidence" value="ECO:0000266"/>
    <property type="project" value="RGD"/>
</dbReference>
<dbReference type="GO" id="GO:0006402">
    <property type="term" value="P:mRNA catabolic process"/>
    <property type="evidence" value="ECO:0007669"/>
    <property type="project" value="InterPro"/>
</dbReference>
<dbReference type="GO" id="GO:0033147">
    <property type="term" value="P:negative regulation of intracellular estrogen receptor signaling pathway"/>
    <property type="evidence" value="ECO:0000250"/>
    <property type="project" value="UniProtKB"/>
</dbReference>
<dbReference type="GO" id="GO:0017148">
    <property type="term" value="P:negative regulation of translation"/>
    <property type="evidence" value="ECO:0000318"/>
    <property type="project" value="GO_Central"/>
</dbReference>
<dbReference type="GO" id="GO:0045742">
    <property type="term" value="P:positive regulation of epidermal growth factor receptor signaling pathway"/>
    <property type="evidence" value="ECO:0000266"/>
    <property type="project" value="RGD"/>
</dbReference>
<dbReference type="GO" id="GO:0031047">
    <property type="term" value="P:regulatory ncRNA-mediated gene silencing"/>
    <property type="evidence" value="ECO:0007669"/>
    <property type="project" value="UniProtKB-KW"/>
</dbReference>
<dbReference type="FunFam" id="1.25.10.10:FF:000037">
    <property type="entry name" value="CCR4-NOT transcription complex subunit 9"/>
    <property type="match status" value="1"/>
</dbReference>
<dbReference type="Gene3D" id="1.25.10.10">
    <property type="entry name" value="Leucine-rich Repeat Variant"/>
    <property type="match status" value="1"/>
</dbReference>
<dbReference type="InterPro" id="IPR011989">
    <property type="entry name" value="ARM-like"/>
</dbReference>
<dbReference type="InterPro" id="IPR016024">
    <property type="entry name" value="ARM-type_fold"/>
</dbReference>
<dbReference type="InterPro" id="IPR007216">
    <property type="entry name" value="CNOT9"/>
</dbReference>
<dbReference type="PANTHER" id="PTHR12262">
    <property type="entry name" value="CCR4-NOT TRANSCRIPTION COMPLEX SUBUNIT 9"/>
    <property type="match status" value="1"/>
</dbReference>
<dbReference type="Pfam" id="PF04078">
    <property type="entry name" value="Rcd1"/>
    <property type="match status" value="1"/>
</dbReference>
<dbReference type="SUPFAM" id="SSF48371">
    <property type="entry name" value="ARM repeat"/>
    <property type="match status" value="1"/>
</dbReference>